<proteinExistence type="inferred from homology"/>
<gene>
    <name evidence="1" type="primary">argB</name>
    <name type="ordered locus">Acry_2143</name>
</gene>
<name>ARGB_ACICJ</name>
<comment type="function">
    <text evidence="1">Catalyzes the ATP-dependent phosphorylation of N-acetyl-L-glutamate.</text>
</comment>
<comment type="catalytic activity">
    <reaction evidence="1">
        <text>N-acetyl-L-glutamate + ATP = N-acetyl-L-glutamyl 5-phosphate + ADP</text>
        <dbReference type="Rhea" id="RHEA:14629"/>
        <dbReference type="ChEBI" id="CHEBI:30616"/>
        <dbReference type="ChEBI" id="CHEBI:44337"/>
        <dbReference type="ChEBI" id="CHEBI:57936"/>
        <dbReference type="ChEBI" id="CHEBI:456216"/>
        <dbReference type="EC" id="2.7.2.8"/>
    </reaction>
</comment>
<comment type="pathway">
    <text evidence="1">Amino-acid biosynthesis; L-arginine biosynthesis; N(2)-acetyl-L-ornithine from L-glutamate: step 2/4.</text>
</comment>
<comment type="subcellular location">
    <subcellularLocation>
        <location evidence="1">Cytoplasm</location>
    </subcellularLocation>
</comment>
<comment type="similarity">
    <text evidence="1">Belongs to the acetylglutamate kinase family. ArgB subfamily.</text>
</comment>
<comment type="sequence caution" evidence="2">
    <conflict type="erroneous initiation">
        <sequence resource="EMBL-CDS" id="ABQ31342"/>
    </conflict>
</comment>
<sequence>MTISDRHADAAEQARIVALALPYLRRYAGATIVVKYGGHAMGEESLAEEFGRDIALLKQVGINPVVVHGGGPQINAMLKRLAIQSTFVDGLRVTDAAMVEVVEMVLAGTVNKMVAGLINRAGALAVGICGKDGGLIRARKLTRTRRDPEGAIERALDLGFVGEPEHVDVRVIHALTGAGLIPVVAPVGVGADGATYNINADTVAGAIAGALGANRLLMLTDVAGVLDRNGKLIPDLSIAEVEALRADGTISGGMIPKVETCIEAVRQGVKGATIVDGRVPHACLLELFTEGGIGTLIHA</sequence>
<accession>A5G0G0</accession>
<evidence type="ECO:0000255" key="1">
    <source>
        <dbReference type="HAMAP-Rule" id="MF_00082"/>
    </source>
</evidence>
<evidence type="ECO:0000305" key="2"/>
<keyword id="KW-0028">Amino-acid biosynthesis</keyword>
<keyword id="KW-0055">Arginine biosynthesis</keyword>
<keyword id="KW-0067">ATP-binding</keyword>
<keyword id="KW-0963">Cytoplasm</keyword>
<keyword id="KW-0418">Kinase</keyword>
<keyword id="KW-0547">Nucleotide-binding</keyword>
<keyword id="KW-1185">Reference proteome</keyword>
<keyword id="KW-0808">Transferase</keyword>
<feature type="chain" id="PRO_0000335601" description="Acetylglutamate kinase">
    <location>
        <begin position="1"/>
        <end position="299"/>
    </location>
</feature>
<feature type="binding site" evidence="1">
    <location>
        <begin position="70"/>
        <end position="71"/>
    </location>
    <ligand>
        <name>substrate</name>
    </ligand>
</feature>
<feature type="binding site" evidence="1">
    <location>
        <position position="92"/>
    </location>
    <ligand>
        <name>substrate</name>
    </ligand>
</feature>
<feature type="binding site" evidence="1">
    <location>
        <position position="197"/>
    </location>
    <ligand>
        <name>substrate</name>
    </ligand>
</feature>
<feature type="site" description="Transition state stabilizer" evidence="1">
    <location>
        <position position="35"/>
    </location>
</feature>
<feature type="site" description="Transition state stabilizer" evidence="1">
    <location>
        <position position="257"/>
    </location>
</feature>
<dbReference type="EC" id="2.7.2.8" evidence="1"/>
<dbReference type="EMBL" id="CP000697">
    <property type="protein sequence ID" value="ABQ31342.1"/>
    <property type="status" value="ALT_INIT"/>
    <property type="molecule type" value="Genomic_DNA"/>
</dbReference>
<dbReference type="SMR" id="A5G0G0"/>
<dbReference type="STRING" id="349163.Acry_2143"/>
<dbReference type="KEGG" id="acr:Acry_2143"/>
<dbReference type="eggNOG" id="COG0548">
    <property type="taxonomic scope" value="Bacteria"/>
</dbReference>
<dbReference type="HOGENOM" id="CLU_053680_0_0_5"/>
<dbReference type="UniPathway" id="UPA00068">
    <property type="reaction ID" value="UER00107"/>
</dbReference>
<dbReference type="Proteomes" id="UP000000245">
    <property type="component" value="Chromosome"/>
</dbReference>
<dbReference type="GO" id="GO:0005737">
    <property type="term" value="C:cytoplasm"/>
    <property type="evidence" value="ECO:0007669"/>
    <property type="project" value="UniProtKB-SubCell"/>
</dbReference>
<dbReference type="GO" id="GO:0003991">
    <property type="term" value="F:acetylglutamate kinase activity"/>
    <property type="evidence" value="ECO:0007669"/>
    <property type="project" value="UniProtKB-UniRule"/>
</dbReference>
<dbReference type="GO" id="GO:0005524">
    <property type="term" value="F:ATP binding"/>
    <property type="evidence" value="ECO:0007669"/>
    <property type="project" value="UniProtKB-UniRule"/>
</dbReference>
<dbReference type="GO" id="GO:0042450">
    <property type="term" value="P:arginine biosynthetic process via ornithine"/>
    <property type="evidence" value="ECO:0007669"/>
    <property type="project" value="UniProtKB-UniRule"/>
</dbReference>
<dbReference type="GO" id="GO:0006526">
    <property type="term" value="P:L-arginine biosynthetic process"/>
    <property type="evidence" value="ECO:0007669"/>
    <property type="project" value="UniProtKB-UniPathway"/>
</dbReference>
<dbReference type="CDD" id="cd04250">
    <property type="entry name" value="AAK_NAGK-C"/>
    <property type="match status" value="1"/>
</dbReference>
<dbReference type="FunFam" id="3.40.1160.10:FF:000004">
    <property type="entry name" value="Acetylglutamate kinase"/>
    <property type="match status" value="1"/>
</dbReference>
<dbReference type="Gene3D" id="3.40.1160.10">
    <property type="entry name" value="Acetylglutamate kinase-like"/>
    <property type="match status" value="1"/>
</dbReference>
<dbReference type="HAMAP" id="MF_00082">
    <property type="entry name" value="ArgB"/>
    <property type="match status" value="1"/>
</dbReference>
<dbReference type="InterPro" id="IPR036393">
    <property type="entry name" value="AceGlu_kinase-like_sf"/>
</dbReference>
<dbReference type="InterPro" id="IPR004662">
    <property type="entry name" value="AcgluKinase_fam"/>
</dbReference>
<dbReference type="InterPro" id="IPR037528">
    <property type="entry name" value="ArgB"/>
</dbReference>
<dbReference type="InterPro" id="IPR001048">
    <property type="entry name" value="Asp/Glu/Uridylate_kinase"/>
</dbReference>
<dbReference type="InterPro" id="IPR001057">
    <property type="entry name" value="Glu/AcGlu_kinase"/>
</dbReference>
<dbReference type="InterPro" id="IPR041727">
    <property type="entry name" value="NAGK-C"/>
</dbReference>
<dbReference type="NCBIfam" id="TIGR00761">
    <property type="entry name" value="argB"/>
    <property type="match status" value="1"/>
</dbReference>
<dbReference type="PANTHER" id="PTHR23342">
    <property type="entry name" value="N-ACETYLGLUTAMATE SYNTHASE"/>
    <property type="match status" value="1"/>
</dbReference>
<dbReference type="PANTHER" id="PTHR23342:SF0">
    <property type="entry name" value="N-ACETYLGLUTAMATE SYNTHASE, MITOCHONDRIAL"/>
    <property type="match status" value="1"/>
</dbReference>
<dbReference type="Pfam" id="PF00696">
    <property type="entry name" value="AA_kinase"/>
    <property type="match status" value="1"/>
</dbReference>
<dbReference type="PIRSF" id="PIRSF000728">
    <property type="entry name" value="NAGK"/>
    <property type="match status" value="1"/>
</dbReference>
<dbReference type="PRINTS" id="PR00474">
    <property type="entry name" value="GLU5KINASE"/>
</dbReference>
<dbReference type="SUPFAM" id="SSF53633">
    <property type="entry name" value="Carbamate kinase-like"/>
    <property type="match status" value="1"/>
</dbReference>
<protein>
    <recommendedName>
        <fullName evidence="1">Acetylglutamate kinase</fullName>
        <ecNumber evidence="1">2.7.2.8</ecNumber>
    </recommendedName>
    <alternativeName>
        <fullName evidence="1">N-acetyl-L-glutamate 5-phosphotransferase</fullName>
    </alternativeName>
    <alternativeName>
        <fullName evidence="1">NAG kinase</fullName>
        <shortName evidence="1">NAGK</shortName>
    </alternativeName>
</protein>
<organism>
    <name type="scientific">Acidiphilium cryptum (strain JF-5)</name>
    <dbReference type="NCBI Taxonomy" id="349163"/>
    <lineage>
        <taxon>Bacteria</taxon>
        <taxon>Pseudomonadati</taxon>
        <taxon>Pseudomonadota</taxon>
        <taxon>Alphaproteobacteria</taxon>
        <taxon>Acetobacterales</taxon>
        <taxon>Acidocellaceae</taxon>
        <taxon>Acidiphilium</taxon>
    </lineage>
</organism>
<reference key="1">
    <citation type="submission" date="2007-05" db="EMBL/GenBank/DDBJ databases">
        <title>Complete sequence of chromosome of Acidiphilium cryptum JF-5.</title>
        <authorList>
            <consortium name="US DOE Joint Genome Institute"/>
            <person name="Copeland A."/>
            <person name="Lucas S."/>
            <person name="Lapidus A."/>
            <person name="Barry K."/>
            <person name="Detter J.C."/>
            <person name="Glavina del Rio T."/>
            <person name="Hammon N."/>
            <person name="Israni S."/>
            <person name="Dalin E."/>
            <person name="Tice H."/>
            <person name="Pitluck S."/>
            <person name="Sims D."/>
            <person name="Brettin T."/>
            <person name="Bruce D."/>
            <person name="Han C."/>
            <person name="Schmutz J."/>
            <person name="Larimer F."/>
            <person name="Land M."/>
            <person name="Hauser L."/>
            <person name="Kyrpides N."/>
            <person name="Kim E."/>
            <person name="Magnuson T."/>
            <person name="Richardson P."/>
        </authorList>
    </citation>
    <scope>NUCLEOTIDE SEQUENCE [LARGE SCALE GENOMIC DNA]</scope>
    <source>
        <strain>JF-5</strain>
    </source>
</reference>